<proteinExistence type="inferred from homology"/>
<sequence length="90" mass="10392">MALNLEKKQEIIKAFATKENDTGSCEVQVALLNERIKLLTEHLKANPKDHSSRLGLLELVAQRRNLLKYIKRTDHARYVVLIEKLGIKDR</sequence>
<protein>
    <recommendedName>
        <fullName evidence="1">Small ribosomal subunit protein uS15</fullName>
    </recommendedName>
    <alternativeName>
        <fullName evidence="2">30S ribosomal protein S15</fullName>
    </alternativeName>
</protein>
<comment type="function">
    <text evidence="1">One of the primary rRNA binding proteins, it binds directly to 16S rRNA where it helps nucleate assembly of the platform of the 30S subunit by binding and bridging several RNA helices of the 16S rRNA.</text>
</comment>
<comment type="function">
    <text evidence="1">Forms an intersubunit bridge (bridge B4) with the 23S rRNA of the 50S subunit in the ribosome.</text>
</comment>
<comment type="subunit">
    <text evidence="1">Part of the 30S ribosomal subunit. Forms a bridge to the 50S subunit in the 70S ribosome, contacting the 23S rRNA.</text>
</comment>
<comment type="similarity">
    <text evidence="1">Belongs to the universal ribosomal protein uS15 family.</text>
</comment>
<keyword id="KW-0687">Ribonucleoprotein</keyword>
<keyword id="KW-0689">Ribosomal protein</keyword>
<keyword id="KW-0694">RNA-binding</keyword>
<keyword id="KW-0699">rRNA-binding</keyword>
<evidence type="ECO:0000255" key="1">
    <source>
        <dbReference type="HAMAP-Rule" id="MF_01343"/>
    </source>
</evidence>
<evidence type="ECO:0000305" key="2"/>
<name>RS15_HELAH</name>
<feature type="chain" id="PRO_1000054794" description="Small ribosomal subunit protein uS15">
    <location>
        <begin position="1"/>
        <end position="90"/>
    </location>
</feature>
<dbReference type="EMBL" id="AM260522">
    <property type="protein sequence ID" value="CAJ99905.1"/>
    <property type="molecule type" value="Genomic_DNA"/>
</dbReference>
<dbReference type="RefSeq" id="WP_011578012.1">
    <property type="nucleotide sequence ID" value="NC_008229.1"/>
</dbReference>
<dbReference type="SMR" id="Q17WS1"/>
<dbReference type="STRING" id="382638.Hac_1144"/>
<dbReference type="GeneID" id="31758499"/>
<dbReference type="KEGG" id="hac:Hac_1144"/>
<dbReference type="eggNOG" id="COG0184">
    <property type="taxonomic scope" value="Bacteria"/>
</dbReference>
<dbReference type="HOGENOM" id="CLU_148518_0_0_7"/>
<dbReference type="OrthoDB" id="9799262at2"/>
<dbReference type="BioCyc" id="HACI382638:HAC_RS04930-MONOMER"/>
<dbReference type="Proteomes" id="UP000000775">
    <property type="component" value="Chromosome"/>
</dbReference>
<dbReference type="GO" id="GO:0022627">
    <property type="term" value="C:cytosolic small ribosomal subunit"/>
    <property type="evidence" value="ECO:0007669"/>
    <property type="project" value="TreeGrafter"/>
</dbReference>
<dbReference type="GO" id="GO:0019843">
    <property type="term" value="F:rRNA binding"/>
    <property type="evidence" value="ECO:0007669"/>
    <property type="project" value="UniProtKB-UniRule"/>
</dbReference>
<dbReference type="GO" id="GO:0003735">
    <property type="term" value="F:structural constituent of ribosome"/>
    <property type="evidence" value="ECO:0007669"/>
    <property type="project" value="InterPro"/>
</dbReference>
<dbReference type="GO" id="GO:0006412">
    <property type="term" value="P:translation"/>
    <property type="evidence" value="ECO:0007669"/>
    <property type="project" value="UniProtKB-UniRule"/>
</dbReference>
<dbReference type="CDD" id="cd00353">
    <property type="entry name" value="Ribosomal_S15p_S13e"/>
    <property type="match status" value="1"/>
</dbReference>
<dbReference type="FunFam" id="1.10.287.10:FF:000002">
    <property type="entry name" value="30S ribosomal protein S15"/>
    <property type="match status" value="1"/>
</dbReference>
<dbReference type="Gene3D" id="6.10.250.3130">
    <property type="match status" value="1"/>
</dbReference>
<dbReference type="Gene3D" id="1.10.287.10">
    <property type="entry name" value="S15/NS1, RNA-binding"/>
    <property type="match status" value="1"/>
</dbReference>
<dbReference type="HAMAP" id="MF_01343_B">
    <property type="entry name" value="Ribosomal_uS15_B"/>
    <property type="match status" value="1"/>
</dbReference>
<dbReference type="InterPro" id="IPR000589">
    <property type="entry name" value="Ribosomal_uS15"/>
</dbReference>
<dbReference type="InterPro" id="IPR005290">
    <property type="entry name" value="Ribosomal_uS15_bac-type"/>
</dbReference>
<dbReference type="InterPro" id="IPR009068">
    <property type="entry name" value="uS15_NS1_RNA-bd_sf"/>
</dbReference>
<dbReference type="NCBIfam" id="TIGR00952">
    <property type="entry name" value="S15_bact"/>
    <property type="match status" value="1"/>
</dbReference>
<dbReference type="PANTHER" id="PTHR23321">
    <property type="entry name" value="RIBOSOMAL PROTEIN S15, BACTERIAL AND ORGANELLAR"/>
    <property type="match status" value="1"/>
</dbReference>
<dbReference type="PANTHER" id="PTHR23321:SF26">
    <property type="entry name" value="SMALL RIBOSOMAL SUBUNIT PROTEIN US15M"/>
    <property type="match status" value="1"/>
</dbReference>
<dbReference type="Pfam" id="PF00312">
    <property type="entry name" value="Ribosomal_S15"/>
    <property type="match status" value="1"/>
</dbReference>
<dbReference type="SMART" id="SM01387">
    <property type="entry name" value="Ribosomal_S15"/>
    <property type="match status" value="1"/>
</dbReference>
<dbReference type="SUPFAM" id="SSF47060">
    <property type="entry name" value="S15/NS1 RNA-binding domain"/>
    <property type="match status" value="1"/>
</dbReference>
<dbReference type="PROSITE" id="PS00362">
    <property type="entry name" value="RIBOSOMAL_S15"/>
    <property type="match status" value="1"/>
</dbReference>
<gene>
    <name evidence="1" type="primary">rpsO</name>
    <name type="ordered locus">Hac_1144</name>
</gene>
<organism>
    <name type="scientific">Helicobacter acinonychis (strain Sheeba)</name>
    <dbReference type="NCBI Taxonomy" id="382638"/>
    <lineage>
        <taxon>Bacteria</taxon>
        <taxon>Pseudomonadati</taxon>
        <taxon>Campylobacterota</taxon>
        <taxon>Epsilonproteobacteria</taxon>
        <taxon>Campylobacterales</taxon>
        <taxon>Helicobacteraceae</taxon>
        <taxon>Helicobacter</taxon>
    </lineage>
</organism>
<reference key="1">
    <citation type="journal article" date="2006" name="PLoS Genet.">
        <title>Who ate whom? Adaptive Helicobacter genomic changes that accompanied a host jump from early humans to large felines.</title>
        <authorList>
            <person name="Eppinger M."/>
            <person name="Baar C."/>
            <person name="Linz B."/>
            <person name="Raddatz G."/>
            <person name="Lanz C."/>
            <person name="Keller H."/>
            <person name="Morelli G."/>
            <person name="Gressmann H."/>
            <person name="Achtman M."/>
            <person name="Schuster S.C."/>
        </authorList>
    </citation>
    <scope>NUCLEOTIDE SEQUENCE [LARGE SCALE GENOMIC DNA]</scope>
    <source>
        <strain>Sheeba</strain>
    </source>
</reference>
<accession>Q17WS1</accession>